<proteinExistence type="evidence at protein level"/>
<comment type="function">
    <molecule>Gag polyprotein</molecule>
    <text evidence="12">Plays a role in budding and is processed by the viral protease during virion maturation outside the cell. During budding, it recruits, in a PPXY-dependent or independent manner, Nedd4-like ubiquitin ligases that conjugate ubiquitin molecules to Gag, or to Gag binding host factors. Interaction with HECT ubiquitin ligases probably links the viral protein to the host ESCRT pathway and facilitates release.</text>
</comment>
<comment type="function">
    <molecule>Matrix protein p15</molecule>
    <text evidence="18">Targets Gag and gag-pol polyproteins to the plasma membrane via a multipartite membrane binding signal, that includes its myristoylated N-terminus. Also mediates nuclear localization of the pre-integration complex.</text>
</comment>
<comment type="function">
    <molecule>RNA-binding phosphoprotein p12</molecule>
    <text evidence="13 14">Constituent of the pre-integration complex (PIC) which tethers the latter to mitotic chromosomes.</text>
</comment>
<comment type="function">
    <molecule>Capsid protein p30</molecule>
    <text evidence="1">Forms the spherical core of the virion that encapsulates the genomic RNA-nucleocapsid complex.</text>
</comment>
<comment type="function">
    <molecule>Nucleocapsid protein p10-Gag</molecule>
    <text evidence="8">Involved in the packaging and encapsidation of two copies of the genome. Binds with high affinity to conserved UCUG elements within the packaging signal, located near the 5'-end of the genome. This binding is dependent on genome dimerization.</text>
</comment>
<comment type="subunit">
    <molecule>Capsid protein p30</molecule>
    <text evidence="1 6 10">Homohexamer; further associates as homomultimer (By similarity). The virus core is composed of a lattice formed from hexagonal rings, each containing six capsid monomers (PubMed:12093170). Interacts with mouse UBE2I and mouse PIAS4 (PubMed:12093170, PubMed:16352559).</text>
</comment>
<comment type="subunit">
    <molecule>Gag polyprotein</molecule>
    <text evidence="9">Interacts (via PPXY motif) with host NEDD4 (PubMed:15908698). Interacts (via PSAP motif) with host TSG101 (PubMed:15908698). Interacts (via LYPX(n)L motif) with host PDCD6IP (PubMed:15908698).</text>
</comment>
<comment type="interaction">
    <interactant intactId="EBI-935477">
        <id>P03332</id>
    </interactant>
    <interactant intactId="EBI-2906753">
        <id>Q9QZK7</id>
        <label>Dok3</label>
    </interactant>
    <organismsDiffer>true</organismsDiffer>
    <experiments>3</experiments>
</comment>
<comment type="interaction">
    <interactant intactId="EBI-935477">
        <id>P03332</id>
    </interactant>
    <interactant intactId="EBI-644633">
        <id>Q9JKF1</id>
        <label>Iqgap1</label>
    </interactant>
    <organismsDiffer>true</organismsDiffer>
    <experiments>17</experiments>
</comment>
<comment type="subcellular location">
    <molecule>Gag polyprotein</molecule>
    <subcellularLocation>
        <location evidence="17">Virion</location>
    </subcellularLocation>
    <subcellularLocation>
        <location evidence="16">Host cell membrane</location>
        <topology evidence="17">Lipid-anchor</topology>
    </subcellularLocation>
    <subcellularLocation>
        <location evidence="17">Host late endosome membrane</location>
        <topology evidence="17">Lipid-anchor</topology>
    </subcellularLocation>
    <subcellularLocation>
        <location evidence="2">Host endosome</location>
        <location evidence="2">Host multivesicular body</location>
    </subcellularLocation>
    <text evidence="17">These locations are probably linked to virus assembly sites.</text>
</comment>
<comment type="subcellular location">
    <molecule>Matrix protein p15</molecule>
    <subcellularLocation>
        <location evidence="17">Virion</location>
    </subcellularLocation>
</comment>
<comment type="subcellular location">
    <molecule>Capsid protein p30</molecule>
    <subcellularLocation>
        <location evidence="17">Virion</location>
    </subcellularLocation>
</comment>
<comment type="subcellular location">
    <molecule>Nucleocapsid protein p10-Gag</molecule>
    <subcellularLocation>
        <location evidence="17">Virion</location>
    </subcellularLocation>
</comment>
<comment type="subcellular location">
    <molecule>RNA-binding phosphoprotein p12</molecule>
    <subcellularLocation>
        <location evidence="13 14">Host cytoplasm</location>
    </subcellularLocation>
    <text evidence="14">Localizes to the host cytoplasm early in infection and binds to the mitotic chromosomes later on.</text>
</comment>
<comment type="alternative products">
    <event type="alternative initiation"/>
    <isoform>
        <id>P03332-1</id>
        <name>Pr65gag</name>
        <sequence type="displayed"/>
    </isoform>
    <isoform>
        <id>P03332-2</id>
        <name>Pr80gag</name>
        <name>GlycoGag</name>
        <sequence type="not described"/>
    </isoform>
</comment>
<comment type="domain">
    <molecule>Gag polyprotein</molecule>
    <text evidence="12">Late-budding domains (L domains) are short sequence motifs essential for viral particle budding. They recruit proteins of the host ESCRT machinery (Endosomal Sorting Complex Required for Transport) or ESCRT-associated proteins. RNA-binding phosphoprotein p12 contains one L domain: a PPXY motif which interacts with the WW domain 3 of NEDD4 E3 ubiquitin ligase. PPXY motif is essential for virus egress. Matrix protein p15 contains one L domain: a PTAP/PSAP motif, which interacts with the UEV domain of TSG101. The junction between the matrix protein p15 and RNA-binding phosphoprotein p12 also contains one L domain: a LYPX(n)L motif which interacts with PDCD6IP. Both PSAP and LYPX(n)L domains might play little to no role in budding and possibly drive residual virus release.</text>
</comment>
<comment type="PTM">
    <molecule>Gag polyprotein</molecule>
    <text evidence="12">Ubiquitinated by ITCH. Gag can recruit the ubiquitin ligase Itch in an L domain-independent manner to facilitate virus release via a mechanism that involves Gag ubiquitination.</text>
</comment>
<comment type="PTM">
    <molecule>Gag polyprotein</molecule>
    <text evidence="11">Specific enzymatic cleavages by the viral protease yield mature proteins. The protease is released by autocatalytic cleavage. The polyprotein is cleaved during and after budding, this process is termed maturation.</text>
</comment>
<comment type="PTM">
    <molecule>Capsid protein p30</molecule>
    <text evidence="10">Sumoylated; required for virus replication.</text>
</comment>
<comment type="PTM">
    <text evidence="7">RNA-binding phosphoprotein p12 is phosphorylated on serine residues.</text>
</comment>
<comment type="miscellaneous">
    <molecule>Isoform Pr80gag</molecule>
    <text evidence="17">Produced by an upstream CUG initiation codon.</text>
</comment>
<name>GAG_MLVMS</name>
<keyword id="KW-0002">3D-structure</keyword>
<keyword id="KW-0024">Alternative initiation</keyword>
<keyword id="KW-0167">Capsid protein</keyword>
<keyword id="KW-0175">Coiled coil</keyword>
<keyword id="KW-0903">Direct protein sequencing</keyword>
<keyword id="KW-1032">Host cell membrane</keyword>
<keyword id="KW-1035">Host cytoplasm</keyword>
<keyword id="KW-1039">Host endosome</keyword>
<keyword id="KW-1043">Host membrane</keyword>
<keyword id="KW-0945">Host-virus interaction</keyword>
<keyword id="KW-0449">Lipoprotein</keyword>
<keyword id="KW-0472">Membrane</keyword>
<keyword id="KW-0479">Metal-binding</keyword>
<keyword id="KW-0519">Myristate</keyword>
<keyword id="KW-0597">Phosphoprotein</keyword>
<keyword id="KW-1185">Reference proteome</keyword>
<keyword id="KW-0694">RNA-binding</keyword>
<keyword id="KW-0832">Ubl conjugation</keyword>
<keyword id="KW-1198">Viral budding</keyword>
<keyword id="KW-1187">Viral budding via the host ESCRT complexes</keyword>
<keyword id="KW-0468">Viral matrix protein</keyword>
<keyword id="KW-0543">Viral nucleoprotein</keyword>
<keyword id="KW-1188">Viral release from host cell</keyword>
<keyword id="KW-0946">Virion</keyword>
<keyword id="KW-0862">Zinc</keyword>
<keyword id="KW-0863">Zinc-finger</keyword>
<accession>P03332</accession>
<accession>Q9WJP4</accession>
<dbReference type="EMBL" id="J02255">
    <property type="protein sequence ID" value="AAB59942.1"/>
    <property type="molecule type" value="Genomic_RNA"/>
</dbReference>
<dbReference type="EMBL" id="AF033811">
    <property type="protein sequence ID" value="AAC82566.1"/>
    <property type="molecule type" value="Genomic_RNA"/>
</dbReference>
<dbReference type="PIR" id="A03930">
    <property type="entry name" value="FOMV1M"/>
</dbReference>
<dbReference type="RefSeq" id="NP_057934.1">
    <property type="nucleotide sequence ID" value="NC_001501.1"/>
</dbReference>
<dbReference type="PDB" id="1A6B">
    <property type="method" value="NMR"/>
    <property type="chains" value="B=492-531"/>
</dbReference>
<dbReference type="PDB" id="1BM4">
    <property type="method" value="NMR"/>
    <property type="chains" value="A=352-382"/>
</dbReference>
<dbReference type="PDB" id="1MN8">
    <property type="method" value="X-ray"/>
    <property type="resolution" value="1.00 A"/>
    <property type="chains" value="A/B/C/D=1-99"/>
</dbReference>
<dbReference type="PDB" id="1U6P">
    <property type="method" value="NMR"/>
    <property type="chains" value="A=479-534"/>
</dbReference>
<dbReference type="PDB" id="1WWD">
    <property type="method" value="NMR"/>
    <property type="chains" value="A=479-534"/>
</dbReference>
<dbReference type="PDB" id="1WWE">
    <property type="method" value="NMR"/>
    <property type="chains" value="A=479-534"/>
</dbReference>
<dbReference type="PDB" id="1WWF">
    <property type="method" value="NMR"/>
    <property type="chains" value="A=479-534"/>
</dbReference>
<dbReference type="PDB" id="1WWG">
    <property type="method" value="NMR"/>
    <property type="chains" value="A=479-534"/>
</dbReference>
<dbReference type="PDBsum" id="1A6B"/>
<dbReference type="PDBsum" id="1BM4"/>
<dbReference type="PDBsum" id="1MN8"/>
<dbReference type="PDBsum" id="1U6P"/>
<dbReference type="PDBsum" id="1WWD"/>
<dbReference type="PDBsum" id="1WWE"/>
<dbReference type="PDBsum" id="1WWF"/>
<dbReference type="PDBsum" id="1WWG"/>
<dbReference type="BMRB" id="P03332"/>
<dbReference type="SMR" id="P03332"/>
<dbReference type="IntAct" id="P03332">
    <property type="interactions" value="6"/>
</dbReference>
<dbReference type="MINT" id="P03332"/>
<dbReference type="iPTMnet" id="P03332"/>
<dbReference type="SwissPalm" id="P03332"/>
<dbReference type="GeneID" id="1491870"/>
<dbReference type="KEGG" id="vg:1491870"/>
<dbReference type="EvolutionaryTrace" id="P03332"/>
<dbReference type="Proteomes" id="UP000006625">
    <property type="component" value="Segment"/>
</dbReference>
<dbReference type="Proteomes" id="UP000180702">
    <property type="component" value="Genome"/>
</dbReference>
<dbReference type="GO" id="GO:0044185">
    <property type="term" value="C:host cell late endosome membrane"/>
    <property type="evidence" value="ECO:0007669"/>
    <property type="project" value="UniProtKB-SubCell"/>
</dbReference>
<dbReference type="GO" id="GO:0020002">
    <property type="term" value="C:host cell plasma membrane"/>
    <property type="evidence" value="ECO:0007669"/>
    <property type="project" value="UniProtKB-SubCell"/>
</dbReference>
<dbReference type="GO" id="GO:0120026">
    <property type="term" value="C:host cell uropod"/>
    <property type="evidence" value="ECO:0000314"/>
    <property type="project" value="CACAO"/>
</dbReference>
<dbReference type="GO" id="GO:0072494">
    <property type="term" value="C:host multivesicular body"/>
    <property type="evidence" value="ECO:0007669"/>
    <property type="project" value="UniProtKB-SubCell"/>
</dbReference>
<dbReference type="GO" id="GO:0016020">
    <property type="term" value="C:membrane"/>
    <property type="evidence" value="ECO:0007669"/>
    <property type="project" value="UniProtKB-KW"/>
</dbReference>
<dbReference type="GO" id="GO:0019013">
    <property type="term" value="C:viral nucleocapsid"/>
    <property type="evidence" value="ECO:0007669"/>
    <property type="project" value="UniProtKB-KW"/>
</dbReference>
<dbReference type="GO" id="GO:0003723">
    <property type="term" value="F:RNA binding"/>
    <property type="evidence" value="ECO:0007669"/>
    <property type="project" value="UniProtKB-KW"/>
</dbReference>
<dbReference type="GO" id="GO:0039660">
    <property type="term" value="F:structural constituent of virion"/>
    <property type="evidence" value="ECO:0007669"/>
    <property type="project" value="UniProtKB-KW"/>
</dbReference>
<dbReference type="GO" id="GO:0008270">
    <property type="term" value="F:zinc ion binding"/>
    <property type="evidence" value="ECO:0007669"/>
    <property type="project" value="UniProtKB-KW"/>
</dbReference>
<dbReference type="GO" id="GO:0039702">
    <property type="term" value="P:viral budding via host ESCRT complex"/>
    <property type="evidence" value="ECO:0007669"/>
    <property type="project" value="UniProtKB-KW"/>
</dbReference>
<dbReference type="FunFam" id="1.10.150.180:FF:000001">
    <property type="entry name" value="Gag polyprotein"/>
    <property type="match status" value="1"/>
</dbReference>
<dbReference type="Gene3D" id="1.10.150.180">
    <property type="entry name" value="Gamma-retroviral matrix domain"/>
    <property type="match status" value="1"/>
</dbReference>
<dbReference type="Gene3D" id="1.10.375.10">
    <property type="entry name" value="Human Immunodeficiency Virus Type 1 Capsid Protein"/>
    <property type="match status" value="1"/>
</dbReference>
<dbReference type="Gene3D" id="4.10.60.10">
    <property type="entry name" value="Zinc finger, CCHC-type"/>
    <property type="match status" value="1"/>
</dbReference>
<dbReference type="InterPro" id="IPR000840">
    <property type="entry name" value="G_retro_matrix"/>
</dbReference>
<dbReference type="InterPro" id="IPR036946">
    <property type="entry name" value="G_retro_matrix_sf"/>
</dbReference>
<dbReference type="InterPro" id="IPR002079">
    <property type="entry name" value="Gag_p12"/>
</dbReference>
<dbReference type="InterPro" id="IPR003036">
    <property type="entry name" value="Gag_P30"/>
</dbReference>
<dbReference type="InterPro" id="IPR008919">
    <property type="entry name" value="Retrov_capsid_N"/>
</dbReference>
<dbReference type="InterPro" id="IPR050462">
    <property type="entry name" value="Retroviral_Gag-Pol_poly"/>
</dbReference>
<dbReference type="InterPro" id="IPR010999">
    <property type="entry name" value="Retrovr_matrix"/>
</dbReference>
<dbReference type="InterPro" id="IPR001878">
    <property type="entry name" value="Znf_CCHC"/>
</dbReference>
<dbReference type="InterPro" id="IPR036875">
    <property type="entry name" value="Znf_CCHC_sf"/>
</dbReference>
<dbReference type="PANTHER" id="PTHR33166">
    <property type="entry name" value="GAG_P30 DOMAIN-CONTAINING PROTEIN"/>
    <property type="match status" value="1"/>
</dbReference>
<dbReference type="Pfam" id="PF01140">
    <property type="entry name" value="Gag_MA"/>
    <property type="match status" value="1"/>
</dbReference>
<dbReference type="Pfam" id="PF01141">
    <property type="entry name" value="Gag_p12"/>
    <property type="match status" value="1"/>
</dbReference>
<dbReference type="Pfam" id="PF02093">
    <property type="entry name" value="Gag_p30"/>
    <property type="match status" value="1"/>
</dbReference>
<dbReference type="Pfam" id="PF00098">
    <property type="entry name" value="zf-CCHC"/>
    <property type="match status" value="1"/>
</dbReference>
<dbReference type="SMART" id="SM00343">
    <property type="entry name" value="ZnF_C2HC"/>
    <property type="match status" value="1"/>
</dbReference>
<dbReference type="SUPFAM" id="SSF47836">
    <property type="entry name" value="Retroviral matrix proteins"/>
    <property type="match status" value="1"/>
</dbReference>
<dbReference type="SUPFAM" id="SSF47943">
    <property type="entry name" value="Retrovirus capsid protein, N-terminal core domain"/>
    <property type="match status" value="1"/>
</dbReference>
<dbReference type="SUPFAM" id="SSF57756">
    <property type="entry name" value="Retrovirus zinc finger-like domains"/>
    <property type="match status" value="1"/>
</dbReference>
<dbReference type="PROSITE" id="PS50158">
    <property type="entry name" value="ZF_CCHC"/>
    <property type="match status" value="1"/>
</dbReference>
<gene>
    <name type="primary">gag</name>
</gene>
<protein>
    <recommendedName>
        <fullName>Gag polyprotein</fullName>
        <shortName>Pr65gag</shortName>
    </recommendedName>
    <alternativeName>
        <fullName>Core polyprotein</fullName>
    </alternativeName>
    <component>
        <recommendedName>
            <fullName>Matrix protein p15</fullName>
            <shortName>MA</shortName>
        </recommendedName>
    </component>
    <component>
        <recommendedName>
            <fullName>RNA-binding phosphoprotein p12</fullName>
        </recommendedName>
        <alternativeName>
            <fullName>pp12</fullName>
        </alternativeName>
    </component>
    <component>
        <recommendedName>
            <fullName>Capsid protein p30</fullName>
            <shortName>CA</shortName>
        </recommendedName>
    </component>
    <component>
        <recommendedName>
            <fullName>Nucleocapsid protein p10-Gag</fullName>
            <shortName>NC-gag</shortName>
        </recommendedName>
    </component>
</protein>
<reference key="1">
    <citation type="journal article" date="1981" name="Nature">
        <title>Nucleotide sequence of Moloney murine leukaemia virus.</title>
        <authorList>
            <person name="Shinnick T.M."/>
            <person name="Lerner R.A."/>
            <person name="Sutcliffe J.G."/>
        </authorList>
    </citation>
    <scope>NUCLEOTIDE SEQUENCE [GENOMIC RNA] (CLONE PMLV-1)</scope>
</reference>
<reference key="2">
    <citation type="submission" date="1997-11" db="EMBL/GenBank/DDBJ databases">
        <authorList>
            <person name="Chappey C."/>
        </authorList>
    </citation>
    <scope>NUCLEOTIDE SEQUENCE [GENOMIC RNA]</scope>
</reference>
<reference key="3">
    <citation type="journal article" date="1983" name="Proc. Natl. Acad. Sci. U.S.A.">
        <title>Myristyl amino-terminal acylation of murine retrovirus proteins: an unusual post-translational proteins modification.</title>
        <authorList>
            <person name="Henderson L.E."/>
            <person name="Krutzsch H.C."/>
            <person name="Oroszlan S."/>
        </authorList>
    </citation>
    <scope>PROTEIN SEQUENCE OF 2-31</scope>
    <scope>MYRISTOYLATION AT GLY-2</scope>
</reference>
<reference key="4">
    <citation type="journal article" date="1981" name="J. Biol. Chem.">
        <title>Primary structure of the low molecular weight nucleic acid-binding proteins of murine leukemia viruses.</title>
        <authorList>
            <person name="Henderson L.E."/>
            <person name="Copeland T.D."/>
            <person name="Sowder R.C."/>
            <person name="Smythers G.W."/>
            <person name="Oroszlan S."/>
        </authorList>
    </citation>
    <scope>PROTEIN SEQUENCE OF 479-529</scope>
</reference>
<reference key="5">
    <citation type="journal article" date="1996" name="J. Cell Biol.">
        <title>Targeting of Moloney murine leukemia virus gag precursor to the site of virus budding.</title>
        <authorList>
            <person name="Suomalainen M."/>
            <person name="Hultenby K."/>
            <person name="Garoff H."/>
        </authorList>
    </citation>
    <scope>SUBCELLULAR LOCATION (GAG POLYPROTEIN)</scope>
</reference>
<reference key="6">
    <citation type="journal article" date="2002" name="Virology">
        <title>Hexagonal organization of Moloney murine leukemia virus capsid proteins.</title>
        <authorList>
            <person name="Mayo K."/>
            <person name="McDermott J."/>
            <person name="Barklis E."/>
        </authorList>
    </citation>
    <scope>SUBUNIT (CAPSID PROTEIN P30)</scope>
</reference>
<reference key="7">
    <citation type="journal article" date="2003" name="J. Virol.">
        <title>Phosphorylated serine residues and an arginine-rich domain of the moloney murine leukemia virus p12 protein are required for early events of viral infection.</title>
        <authorList>
            <person name="Yueh A."/>
            <person name="Goff S.P."/>
        </authorList>
    </citation>
    <scope>PHOSPHORYLATION AT SER-192</scope>
    <scope>MUTAGENESIS OF SER-137; SER-148; SER-150; SER-192; SER-196; SER-209 AND SER-212</scope>
</reference>
<reference key="8">
    <citation type="journal article" date="2005" name="J. Biol. Chem.">
        <title>Tsg101 and Alix interact with murine leukemia virus Gag and cooperate with Nedd4 ubiquitin ligases during budding.</title>
        <authorList>
            <person name="Segura-Morales C."/>
            <person name="Pescia C."/>
            <person name="Chatellard-Causse C."/>
            <person name="Sadoul R."/>
            <person name="Bertrand E."/>
            <person name="Basyuk E."/>
        </authorList>
    </citation>
    <scope>INTERACTION WITH MOUSE NEDD4; TSG101 AND PDCD6IP/ALIX (GAG POLYPROTEIN)</scope>
    <scope>MUTAGENESIS OF TYR-165</scope>
</reference>
<reference key="9">
    <citation type="journal article" date="2006" name="J. Virol.">
        <title>Interaction of moloney murine leukemia virus capsid with Ubc9 and PIASy mediates SUMO-1 addition required early in infection.</title>
        <authorList>
            <person name="Yueh A."/>
            <person name="Leung J."/>
            <person name="Bhattacharyya S."/>
            <person name="Perrone L.A."/>
            <person name="de los Santos K."/>
            <person name="Pu S.-Y."/>
            <person name="Goff S.P."/>
        </authorList>
    </citation>
    <scope>INTERACTION WITH UBE2I AND PIAS4 (CAPSID PROTEIN P30)</scope>
    <scope>SUMOYLATION (CAPSID PROTEIN P30)</scope>
</reference>
<reference key="10">
    <citation type="journal article" date="2006" name="J. Gen. Virol.">
        <title>Characterization of the murine leukemia virus protease and its comparison with the human immunodeficiency virus type 1 protease.</title>
        <authorList>
            <person name="Feher A."/>
            <person name="Boross P."/>
            <person name="Sperka T."/>
            <person name="Miklossy G."/>
            <person name="Kadas J."/>
            <person name="Bagossi P."/>
            <person name="Oroszlan S."/>
            <person name="Weber I.T."/>
            <person name="Tozser J."/>
        </authorList>
    </citation>
    <scope>PROTEOLYTIC CLEAVAGE (GAG POLYPROTEIN)</scope>
</reference>
<reference key="11">
    <citation type="journal article" date="2010" name="PLoS Pathog.">
        <title>The Gag cleavage product, p12, is a functional constituent of the murine leukemia virus pre-integration complex.</title>
        <authorList>
            <person name="Prizan-Ravid A."/>
            <person name="Elis E."/>
            <person name="Laham-Karam N."/>
            <person name="Selig S."/>
            <person name="Ehrlich M."/>
            <person name="Bacharach E."/>
        </authorList>
    </citation>
    <scope>FUNCTION (RNA-BINDING PHOSPHOPROTEIN P12)</scope>
    <scope>SUBCELLULAR LOCATION (RNA-BINDING PHOSPHOPROTEIN P12)</scope>
</reference>
<reference key="12">
    <citation type="journal article" date="2010" name="J. Virol.">
        <title>Late domain-independent rescue of a release-deficient Moloney murine leukemia virus by the ubiquitin ligase Itch.</title>
        <authorList>
            <person name="Jadwin J.A."/>
            <person name="Rudd V."/>
            <person name="Sette P."/>
            <person name="Challa S."/>
            <person name="Bouamr F."/>
        </authorList>
    </citation>
    <scope>DOMAIN LATE-BUDDING</scope>
    <scope>FUNCTION (GAG POLYPROTEIN)</scope>
    <scope>UBIQUITINATION (GAG POLYPROTEIN)</scope>
</reference>
<reference key="13">
    <citation type="journal article" date="2012" name="PLoS Pathog.">
        <title>p12 tethers the murine leukemia virus pre-integration complex to mitotic chromosomes.</title>
        <authorList>
            <person name="Elis E."/>
            <person name="Ehrlich M."/>
            <person name="Prizan-Ravid A."/>
            <person name="Laham-Karam N."/>
            <person name="Bacharach E."/>
        </authorList>
    </citation>
    <scope>FUNCTION (RNA-BINDING PHOSPHOPROTEIN P12)</scope>
    <scope>SUBCELLULAR LOCATION (RNA-BINDING PHOSPHOPROTEIN P12)</scope>
    <scope>MUTAGENESIS OF SER-192 AND SER-196</scope>
</reference>
<reference key="14">
    <citation type="journal article" date="1994" name="J. Biomol. NMR">
        <title>Three-dimensional 1H NMR structure of the nucleocapsid protein NCp10 of Moloney murine leukemia virus.</title>
        <authorList>
            <person name="Demene H."/>
            <person name="Jullian N."/>
            <person name="Morellet N."/>
            <person name="de Rocquigny H."/>
            <person name="Cornille F."/>
            <person name="Maigret B."/>
            <person name="Roques B.P."/>
        </authorList>
    </citation>
    <scope>STRUCTURE BY NMR OF 492-531</scope>
</reference>
<reference key="15">
    <citation type="journal article" date="1998" name="Eur. J. Biochem.">
        <title>Solution structures of human immunodeficiency virus type 1 (HIV-1) and moloney murine leukemia virus (MoMLV) capsid protein major-homology-region peptide analogs by NMR spectroscopy.</title>
        <authorList>
            <person name="Clish C.B."/>
            <person name="Peyton D.H."/>
            <person name="Barklis E."/>
        </authorList>
    </citation>
    <scope>STRUCTURE BY NMR OF 352-382</scope>
</reference>
<reference key="16">
    <citation type="journal article" date="2002" name="Structure">
        <title>Atomic resolution structure of Moloney murine leukemia virus matrix protein and its relationship to other retroviral matrix proteins.</title>
        <authorList>
            <person name="Riffel N."/>
            <person name="Harlos K."/>
            <person name="Iourin O."/>
            <person name="Rao Z."/>
            <person name="Kingsman A."/>
            <person name="Stuart D."/>
            <person name="Fry E."/>
        </authorList>
    </citation>
    <scope>X-RAY CRYSTALLOGRAPHY (1.0 ANGSTROMS) OF 1-99</scope>
    <scope>FUNCTION (MATRIX PROTEIN P15)</scope>
</reference>
<reference key="17">
    <citation type="journal article" date="2004" name="Nature">
        <title>Structural basis for packaging the dimeric genome of Moloney murine leukaemia virus.</title>
        <authorList>
            <person name="D'Souza V."/>
            <person name="Summers M.F."/>
        </authorList>
    </citation>
    <scope>STRUCTURE BY NMR OF 479-534</scope>
    <scope>FUNCTION (NUCLEOCAPSID PROTEIN P10-GAG)</scope>
    <scope>RNA-BINDING (NUCLEOCAPSID PROTEIN P10-GAG)</scope>
</reference>
<reference key="18">
    <citation type="journal article" date="2005" name="Biochemistry">
        <title>Composition and sequence-dependent binding of RNA to the nucleocapsid protein of Moloney murine leukemia virus.</title>
        <authorList>
            <person name="Dey A."/>
            <person name="York D."/>
            <person name="Smalls-Mantey A."/>
            <person name="Summers M.F."/>
        </authorList>
    </citation>
    <scope>STRUCTURE BY NMR OF 479-534</scope>
    <scope>RNA-BINDING (NUCLEOCAPSID PROTEIN P10-GAG)</scope>
</reference>
<evidence type="ECO:0000250" key="1">
    <source>
        <dbReference type="UniProtKB" id="P03336"/>
    </source>
</evidence>
<evidence type="ECO:0000250" key="2">
    <source>
        <dbReference type="UniProtKB" id="P26807"/>
    </source>
</evidence>
<evidence type="ECO:0000255" key="3"/>
<evidence type="ECO:0000255" key="4">
    <source>
        <dbReference type="PROSITE-ProRule" id="PRU00047"/>
    </source>
</evidence>
<evidence type="ECO:0000256" key="5">
    <source>
        <dbReference type="SAM" id="MobiDB-lite"/>
    </source>
</evidence>
<evidence type="ECO:0000269" key="6">
    <source>
    </source>
</evidence>
<evidence type="ECO:0000269" key="7">
    <source>
    </source>
</evidence>
<evidence type="ECO:0000269" key="8">
    <source>
    </source>
</evidence>
<evidence type="ECO:0000269" key="9">
    <source>
    </source>
</evidence>
<evidence type="ECO:0000269" key="10">
    <source>
    </source>
</evidence>
<evidence type="ECO:0000269" key="11">
    <source>
    </source>
</evidence>
<evidence type="ECO:0000269" key="12">
    <source>
    </source>
</evidence>
<evidence type="ECO:0000269" key="13">
    <source>
    </source>
</evidence>
<evidence type="ECO:0000269" key="14">
    <source>
    </source>
</evidence>
<evidence type="ECO:0000269" key="15">
    <source>
    </source>
</evidence>
<evidence type="ECO:0000269" key="16">
    <source>
    </source>
</evidence>
<evidence type="ECO:0000305" key="17"/>
<evidence type="ECO:0000305" key="18">
    <source>
    </source>
</evidence>
<evidence type="ECO:0000305" key="19">
    <source>
    </source>
</evidence>
<evidence type="ECO:0007829" key="20">
    <source>
        <dbReference type="PDB" id="1A6B"/>
    </source>
</evidence>
<evidence type="ECO:0007829" key="21">
    <source>
        <dbReference type="PDB" id="1BM4"/>
    </source>
</evidence>
<evidence type="ECO:0007829" key="22">
    <source>
        <dbReference type="PDB" id="1MN8"/>
    </source>
</evidence>
<evidence type="ECO:0007829" key="23">
    <source>
        <dbReference type="PDB" id="1U6P"/>
    </source>
</evidence>
<evidence type="ECO:0007829" key="24">
    <source>
        <dbReference type="PDB" id="1WWD"/>
    </source>
</evidence>
<evidence type="ECO:0007829" key="25">
    <source>
        <dbReference type="PDB" id="1WWG"/>
    </source>
</evidence>
<organism>
    <name type="scientific">Moloney murine leukemia virus (isolate Shinnick)</name>
    <name type="common">MoMLV</name>
    <dbReference type="NCBI Taxonomy" id="928306"/>
    <lineage>
        <taxon>Viruses</taxon>
        <taxon>Riboviria</taxon>
        <taxon>Pararnavirae</taxon>
        <taxon>Artverviricota</taxon>
        <taxon>Revtraviricetes</taxon>
        <taxon>Ortervirales</taxon>
        <taxon>Retroviridae</taxon>
        <taxon>Orthoretrovirinae</taxon>
        <taxon>Gammaretrovirus</taxon>
        <taxon>Murine leukemia virus</taxon>
    </lineage>
</organism>
<sequence>MGQTVTTPLSLTLGHWKDVERIAHNQSVDVKKRRWVTFCSAEWPTFNVGWPRDGTFNRDLITQVKIKVFSPGPHGHPDQVPYIVTWEALAFDPPPWVKPFVHPKPPPPLPPSAPSLPLEPPRSTPPRSSLYPALTPSLGAKPKPQVLSDSGGPLIDLLTEDPPPYRDPRPPPSDRDGNGGEATPAGEAPDPSPMASRLRGRREPPVADSTTSQAFPLRAGGNGQLQYWPFSSSDLYNWKNNNPSFSEDPGKLTALIESVLITHQPTWDDCQQLLGTLLTGEEKQRVLLEARKAVRGDDGRPTQLPNEVDAAFPLERPDWDYTTQAGRNHLVHYRQLLLAGLQNAGRSPTNLAKVKGITQGPNESPSAFLERLKEAYRRYTPYDPEDPGQETNVSMSFIWQSAPDIGRKLERLEDLKNKTLGDLVREAEKIFNKRETPEEREERIRRETEEKEERRRTEDEQKEKERDRRRHREMSKLLATVVSGQKQDRQGGERRRSQLDRDQCAYCKEKGHWAKDCPKKPRGPRGPRPQTSLLTLDD</sequence>
<organismHost>
    <name type="scientific">Mus musculus</name>
    <name type="common">Mouse</name>
    <dbReference type="NCBI Taxonomy" id="10090"/>
</organismHost>
<feature type="initiator methionine" description="Removed; by host" evidence="3 15">
    <location>
        <position position="1"/>
    </location>
</feature>
<feature type="chain" id="PRO_0000390815" description="Gag polyprotein">
    <location>
        <begin position="2"/>
        <end position="538"/>
    </location>
</feature>
<feature type="chain" id="PRO_0000040912" description="Matrix protein p15">
    <location>
        <begin position="2"/>
        <end position="131"/>
    </location>
</feature>
<feature type="chain" id="PRO_0000040913" description="RNA-binding phosphoprotein p12">
    <location>
        <begin position="132"/>
        <end position="215"/>
    </location>
</feature>
<feature type="chain" id="PRO_0000040914" description="Capsid protein p30">
    <location>
        <begin position="216"/>
        <end position="478"/>
    </location>
</feature>
<feature type="chain" id="PRO_0000040915" description="Nucleocapsid protein p10-Gag">
    <location>
        <begin position="479"/>
        <end position="538"/>
    </location>
</feature>
<feature type="zinc finger region" description="CCHC-type" evidence="4">
    <location>
        <begin position="502"/>
        <end position="519"/>
    </location>
</feature>
<feature type="region of interest" description="Disordered" evidence="5">
    <location>
        <begin position="108"/>
        <end position="220"/>
    </location>
</feature>
<feature type="region of interest" description="Interaction with host PIAS4" evidence="10">
    <location>
        <begin position="345"/>
        <end position="393"/>
    </location>
</feature>
<feature type="region of interest" description="Interaction with host UBE2I" evidence="10">
    <location>
        <begin position="430"/>
        <end position="435"/>
    </location>
</feature>
<feature type="region of interest" description="Disordered" evidence="5">
    <location>
        <begin position="434"/>
        <end position="538"/>
    </location>
</feature>
<feature type="coiled-coil region" evidence="3">
    <location>
        <begin position="438"/>
        <end position="478"/>
    </location>
</feature>
<feature type="short sequence motif" description="PTAP/PSAP motif" evidence="12">
    <location>
        <begin position="111"/>
        <end position="114"/>
    </location>
</feature>
<feature type="short sequence motif" description="LYPX(n)L motif" evidence="12">
    <location>
        <begin position="130"/>
        <end position="134"/>
    </location>
</feature>
<feature type="short sequence motif" description="PPXY motif" evidence="12">
    <location>
        <begin position="162"/>
        <end position="165"/>
    </location>
</feature>
<feature type="compositionally biased region" description="Pro residues" evidence="5">
    <location>
        <begin position="108"/>
        <end position="124"/>
    </location>
</feature>
<feature type="compositionally biased region" description="Basic and acidic residues" evidence="5">
    <location>
        <begin position="163"/>
        <end position="178"/>
    </location>
</feature>
<feature type="compositionally biased region" description="Basic and acidic residues" evidence="5">
    <location>
        <begin position="434"/>
        <end position="466"/>
    </location>
</feature>
<feature type="compositionally biased region" description="Basic and acidic residues" evidence="5">
    <location>
        <begin position="486"/>
        <end position="519"/>
    </location>
</feature>
<feature type="site" description="Cleavage; by viral protease" evidence="11">
    <location>
        <begin position="131"/>
        <end position="132"/>
    </location>
</feature>
<feature type="site" description="Cleavage; by viral protease" evidence="11">
    <location>
        <begin position="215"/>
        <end position="216"/>
    </location>
</feature>
<feature type="site" description="Cleavage; by viral protease" evidence="11">
    <location>
        <begin position="478"/>
        <end position="479"/>
    </location>
</feature>
<feature type="modified residue" description="Phosphoserine; by host" evidence="19">
    <location>
        <position position="192"/>
    </location>
</feature>
<feature type="lipid moiety-binding region" description="N-myristoyl glycine; by host" evidence="3 15">
    <location>
        <position position="2"/>
    </location>
</feature>
<feature type="mutagenesis site" description="Slight reduction in the number of virus-like particles produced.">
    <original>P</original>
    <variation>A</variation>
    <location>
        <position position="114"/>
    </location>
</feature>
<feature type="mutagenesis site" description="No effect on reverse transcription activity." evidence="7">
    <original>S</original>
    <variation>A</variation>
    <location>
        <position position="137"/>
    </location>
</feature>
<feature type="mutagenesis site" description="No effect on reverse transcription activity; when associated with A-150." evidence="7">
    <original>S</original>
    <variation>A</variation>
    <location>
        <position position="148"/>
    </location>
</feature>
<feature type="mutagenesis site" description="No effect on reverse transcription activity; when associated with A-148." evidence="7">
    <original>S</original>
    <variation>A</variation>
    <location>
        <position position="150"/>
    </location>
</feature>
<feature type="mutagenesis site" description="Drastic reduction in the number of virus-like particles produced." evidence="9">
    <original>Y</original>
    <variation>A</variation>
    <location>
        <position position="165"/>
    </location>
</feature>
<feature type="mutagenesis site" description="Complete loss of reverse transcription activity." evidence="7">
    <original>S</original>
    <variation>A</variation>
    <location>
        <position position="192"/>
    </location>
</feature>
<feature type="mutagenesis site" description="Complete loss of stable anchoring of viral PIC to mitotic chromosomes; when associated with A-196." evidence="14">
    <original>S</original>
    <variation>A</variation>
    <location>
        <position position="192"/>
    </location>
</feature>
<feature type="mutagenesis site" description="Complete loss of reverse transcription activity." evidence="7">
    <original>S</original>
    <variation>D</variation>
    <location>
        <position position="192"/>
    </location>
</feature>
<feature type="mutagenesis site" description="Complete loss of stable anchoring of viral PIC to mitotic chromosomes; when associated with A-192." evidence="14">
    <original>S</original>
    <variation>A</variation>
    <location>
        <position position="196"/>
    </location>
</feature>
<feature type="mutagenesis site" description="No effect on reverse transcription activity." evidence="7">
    <original>S</original>
    <variation>A</variation>
    <location>
        <position position="196"/>
    </location>
</feature>
<feature type="mutagenesis site" description="Strongly reduced reverse transcription activity." evidence="7">
    <original>S</original>
    <variation>A</variation>
    <location>
        <position position="209"/>
    </location>
</feature>
<feature type="mutagenesis site" description="Strongly reduced reverse transcription activity." evidence="7">
    <original>S</original>
    <variation>D</variation>
    <location>
        <position position="209"/>
    </location>
</feature>
<feature type="mutagenesis site" description="No effect on reverse transcription activity." evidence="7">
    <original>S</original>
    <variation>A</variation>
    <location>
        <position position="212"/>
    </location>
</feature>
<feature type="helix" evidence="22">
    <location>
        <begin position="8"/>
        <end position="14"/>
    </location>
</feature>
<feature type="helix" evidence="22">
    <location>
        <begin position="16"/>
        <end position="25"/>
    </location>
</feature>
<feature type="helix" evidence="22">
    <location>
        <begin position="32"/>
        <end position="40"/>
    </location>
</feature>
<feature type="helix" evidence="22">
    <location>
        <begin position="43"/>
        <end position="46"/>
    </location>
</feature>
<feature type="helix" evidence="22">
    <location>
        <begin position="58"/>
        <end position="68"/>
    </location>
</feature>
<feature type="helix" evidence="22">
    <location>
        <begin position="77"/>
        <end position="79"/>
    </location>
</feature>
<feature type="helix" evidence="22">
    <location>
        <begin position="80"/>
        <end position="91"/>
    </location>
</feature>
<feature type="turn" evidence="21">
    <location>
        <begin position="356"/>
        <end position="360"/>
    </location>
</feature>
<feature type="helix" evidence="21">
    <location>
        <begin position="361"/>
        <end position="363"/>
    </location>
</feature>
<feature type="helix" evidence="21">
    <location>
        <begin position="364"/>
        <end position="378"/>
    </location>
</feature>
<feature type="strand" evidence="24">
    <location>
        <begin position="494"/>
        <end position="496"/>
    </location>
</feature>
<feature type="strand" evidence="20">
    <location>
        <begin position="501"/>
        <end position="503"/>
    </location>
</feature>
<feature type="strand" evidence="20">
    <location>
        <begin position="505"/>
        <end position="507"/>
    </location>
</feature>
<feature type="strand" evidence="23">
    <location>
        <begin position="510"/>
        <end position="512"/>
    </location>
</feature>
<feature type="helix" evidence="23">
    <location>
        <begin position="514"/>
        <end position="516"/>
    </location>
</feature>
<feature type="strand" evidence="20">
    <location>
        <begin position="518"/>
        <end position="520"/>
    </location>
</feature>
<feature type="strand" evidence="25">
    <location>
        <begin position="522"/>
        <end position="524"/>
    </location>
</feature>